<name>MTR1_CERSP</name>
<keyword id="KW-0002">3D-structure</keyword>
<keyword id="KW-0903">Direct protein sequencing</keyword>
<keyword id="KW-0238">DNA-binding</keyword>
<keyword id="KW-0489">Methyltransferase</keyword>
<keyword id="KW-0680">Restriction system</keyword>
<keyword id="KW-0949">S-adenosyl-L-methionine</keyword>
<keyword id="KW-0808">Transferase</keyword>
<protein>
    <recommendedName>
        <fullName evidence="4">Type II methyltransferase M.RsrI</fullName>
        <shortName evidence="5">M.RsrI</shortName>
        <ecNumber evidence="2">2.1.1.72</ecNumber>
    </recommendedName>
    <alternativeName>
        <fullName>Adenine-specific methyltransferase RsrI</fullName>
    </alternativeName>
    <alternativeName>
        <fullName>Modification methylase RsrI</fullName>
    </alternativeName>
</protein>
<accession>P14751</accession>
<gene>
    <name evidence="5" type="primary">rsrIM</name>
</gene>
<proteinExistence type="evidence at protein level"/>
<comment type="function">
    <text evidence="2 3">A beta subtype methylase, recognizes the double-stranded sequence 5'-GAATTC-3', methylates A-3 on both strands, and protects the DNA from cleavage by the RsrI endonuclease.</text>
</comment>
<comment type="catalytic activity">
    <reaction evidence="2">
        <text>a 2'-deoxyadenosine in DNA + S-adenosyl-L-methionine = an N(6)-methyl-2'-deoxyadenosine in DNA + S-adenosyl-L-homocysteine + H(+)</text>
        <dbReference type="Rhea" id="RHEA:15197"/>
        <dbReference type="Rhea" id="RHEA-COMP:12418"/>
        <dbReference type="Rhea" id="RHEA-COMP:12419"/>
        <dbReference type="ChEBI" id="CHEBI:15378"/>
        <dbReference type="ChEBI" id="CHEBI:57856"/>
        <dbReference type="ChEBI" id="CHEBI:59789"/>
        <dbReference type="ChEBI" id="CHEBI:90615"/>
        <dbReference type="ChEBI" id="CHEBI:90616"/>
        <dbReference type="EC" id="2.1.1.72"/>
    </reaction>
</comment>
<comment type="activity regulation">
    <text evidence="2">Strongly inhibited by N-ethylmaleimide, inactivated by MgCl(2) or MgSO(4).</text>
</comment>
<comment type="biophysicochemical properties">
    <phDependence>
        <text evidence="2">Optimum pH is 7.5.</text>
    </phDependence>
    <temperatureDependence>
        <text evidence="2">Optimum temperature is 37 degrees Celsius. It has about 60% activity at 30 degrees Celsius, the optimal growth temperature for this bacteria.</text>
    </temperatureDependence>
</comment>
<comment type="similarity">
    <text evidence="6">Belongs to the N(4)/N(6)-methyltransferase family.</text>
</comment>
<reference key="1">
    <citation type="journal article" date="1989" name="Nucleic Acids Res.">
        <title>Purification, cloning and sequence analysis of RsrI DNA methyltransferase: lack of homology between two enzymes, RsrI and EcoRI, that methylate the same nucleotide in identical recognition sequences.</title>
        <authorList>
            <person name="Kaszubska W."/>
            <person name="Aiken C."/>
            <person name="O'Connor D."/>
            <person name="Gumport R.I."/>
            <person name="Stephenson F.H."/>
            <person name="Greene P.J."/>
        </authorList>
    </citation>
    <scope>NUCLEOTIDE SEQUENCE [GENOMIC DNA]</scope>
    <scope>PROTEIN SEQUENCE OF 2-18</scope>
    <scope>FUNCTION</scope>
    <scope>CATALYTIC ACTIVITY</scope>
    <scope>ACTIVITY REGULATION</scope>
    <scope>BIOPHYSICOCHEMICAL PROPERTIES</scope>
    <source>
        <strain>630</strain>
    </source>
</reference>
<reference key="2">
    <citation type="journal article" date="1989" name="Nucleic Acids Res.">
        <title>Nucleotide sequence of the gene encoding the RsrI methyltransferase.</title>
        <authorList>
            <person name="Stephenson F.H."/>
            <person name="Greene P.J."/>
        </authorList>
    </citation>
    <scope>NUCLEOTIDE SEQUENCE [GENOMIC DNA]</scope>
    <source>
        <strain>630</strain>
    </source>
</reference>
<reference key="3">
    <citation type="journal article" date="2003" name="Nucleic Acids Res.">
        <title>A nomenclature for restriction enzymes, DNA methyltransferases, homing endonucleases and their genes.</title>
        <authorList>
            <person name="Roberts R.J."/>
            <person name="Belfort M."/>
            <person name="Bestor T."/>
            <person name="Bhagwat A.S."/>
            <person name="Bickle T.A."/>
            <person name="Bitinaite J."/>
            <person name="Blumenthal R.M."/>
            <person name="Degtyarev S.K."/>
            <person name="Dryden D.T."/>
            <person name="Dybvig K."/>
            <person name="Firman K."/>
            <person name="Gromova E.S."/>
            <person name="Gumport R.I."/>
            <person name="Halford S.E."/>
            <person name="Hattman S."/>
            <person name="Heitman J."/>
            <person name="Hornby D.P."/>
            <person name="Janulaitis A."/>
            <person name="Jeltsch A."/>
            <person name="Josephsen J."/>
            <person name="Kiss A."/>
            <person name="Klaenhammer T.R."/>
            <person name="Kobayashi I."/>
            <person name="Kong H."/>
            <person name="Krueger D.H."/>
            <person name="Lacks S."/>
            <person name="Marinus M.G."/>
            <person name="Miyahara M."/>
            <person name="Morgan R.D."/>
            <person name="Murray N.E."/>
            <person name="Nagaraja V."/>
            <person name="Piekarowicz A."/>
            <person name="Pingoud A."/>
            <person name="Raleigh E."/>
            <person name="Rao D.N."/>
            <person name="Reich N."/>
            <person name="Repin V.E."/>
            <person name="Selker E.U."/>
            <person name="Shaw P.C."/>
            <person name="Stein D.C."/>
            <person name="Stoddard B.L."/>
            <person name="Szybalski W."/>
            <person name="Trautner T.A."/>
            <person name="Van Etten J.L."/>
            <person name="Vitor J.M."/>
            <person name="Wilson G.G."/>
            <person name="Xu S.Y."/>
        </authorList>
    </citation>
    <scope>NOMENCLATURE</scope>
    <scope>SUBTYPE</scope>
</reference>
<reference evidence="7" key="4">
    <citation type="journal article" date="2000" name="Nucleic Acids Res.">
        <title>Structure of RsrI methyltransferase, a member of the N6-adenine beta class of DNA methyltransferases.</title>
        <authorList>
            <person name="Scavetta R.D."/>
            <person name="Thomas C.B."/>
            <person name="Walsh M.A."/>
            <person name="Szegedi S."/>
            <person name="Joachimiak A."/>
            <person name="Gumport R.I."/>
            <person name="Churchill M.E."/>
        </authorList>
    </citation>
    <scope>X-RAY CRYSTALLOGRAPHY (1.75 ANGSTROMS)</scope>
</reference>
<organism>
    <name type="scientific">Cereibacter sphaeroides</name>
    <name type="common">Rhodobacter sphaeroides</name>
    <dbReference type="NCBI Taxonomy" id="1063"/>
    <lineage>
        <taxon>Bacteria</taxon>
        <taxon>Pseudomonadati</taxon>
        <taxon>Pseudomonadota</taxon>
        <taxon>Alphaproteobacteria</taxon>
        <taxon>Rhodobacterales</taxon>
        <taxon>Paracoccaceae</taxon>
        <taxon>Cereibacter</taxon>
    </lineage>
</organism>
<feature type="initiator methionine" description="Removed" evidence="2">
    <location>
        <position position="1"/>
    </location>
</feature>
<feature type="chain" id="PRO_0000087970" description="Type II methyltransferase M.RsrI">
    <location>
        <begin position="2"/>
        <end position="319"/>
    </location>
</feature>
<feature type="region of interest" description="Disordered" evidence="1">
    <location>
        <begin position="1"/>
        <end position="32"/>
    </location>
</feature>
<feature type="compositionally biased region" description="Basic residues" evidence="1">
    <location>
        <begin position="1"/>
        <end position="10"/>
    </location>
</feature>
<feature type="strand" evidence="8">
    <location>
        <begin position="38"/>
        <end position="44"/>
    </location>
</feature>
<feature type="helix" evidence="8">
    <location>
        <begin position="47"/>
        <end position="52"/>
    </location>
</feature>
<feature type="strand" evidence="8">
    <location>
        <begin position="59"/>
        <end position="64"/>
    </location>
</feature>
<feature type="helix" evidence="8">
    <location>
        <begin position="72"/>
        <end position="76"/>
    </location>
</feature>
<feature type="helix" evidence="8">
    <location>
        <begin position="81"/>
        <end position="95"/>
    </location>
</feature>
<feature type="strand" evidence="8">
    <location>
        <begin position="96"/>
        <end position="106"/>
    </location>
</feature>
<feature type="helix" evidence="8">
    <location>
        <begin position="119"/>
        <end position="129"/>
    </location>
</feature>
<feature type="strand" evidence="8">
    <location>
        <begin position="133"/>
        <end position="141"/>
    </location>
</feature>
<feature type="strand" evidence="8">
    <location>
        <begin position="149"/>
        <end position="151"/>
    </location>
</feature>
<feature type="strand" evidence="8">
    <location>
        <begin position="156"/>
        <end position="165"/>
    </location>
</feature>
<feature type="helix" evidence="8">
    <location>
        <begin position="173"/>
        <end position="175"/>
    </location>
</feature>
<feature type="helix" evidence="8">
    <location>
        <begin position="181"/>
        <end position="188"/>
    </location>
</feature>
<feature type="helix" evidence="8">
    <location>
        <begin position="195"/>
        <end position="200"/>
    </location>
</feature>
<feature type="strand" evidence="8">
    <location>
        <begin position="206"/>
        <end position="209"/>
    </location>
</feature>
<feature type="helix" evidence="8">
    <location>
        <begin position="229"/>
        <end position="239"/>
    </location>
</feature>
<feature type="strand" evidence="8">
    <location>
        <begin position="245"/>
        <end position="248"/>
    </location>
</feature>
<feature type="turn" evidence="9">
    <location>
        <begin position="252"/>
        <end position="254"/>
    </location>
</feature>
<feature type="helix" evidence="8">
    <location>
        <begin position="255"/>
        <end position="263"/>
    </location>
</feature>
<feature type="strand" evidence="8">
    <location>
        <begin position="266"/>
        <end position="273"/>
    </location>
</feature>
<feature type="helix" evidence="8">
    <location>
        <begin position="275"/>
        <end position="286"/>
    </location>
</feature>
<feature type="strand" evidence="8">
    <location>
        <begin position="299"/>
        <end position="303"/>
    </location>
</feature>
<feature type="helix" evidence="8">
    <location>
        <begin position="305"/>
        <end position="308"/>
    </location>
</feature>
<feature type="helix" evidence="8">
    <location>
        <begin position="309"/>
        <end position="312"/>
    </location>
</feature>
<evidence type="ECO:0000256" key="1">
    <source>
        <dbReference type="SAM" id="MobiDB-lite"/>
    </source>
</evidence>
<evidence type="ECO:0000269" key="2">
    <source>
    </source>
</evidence>
<evidence type="ECO:0000303" key="3">
    <source>
    </source>
</evidence>
<evidence type="ECO:0000303" key="4">
    <source>
    </source>
</evidence>
<evidence type="ECO:0000303" key="5">
    <source>
    </source>
</evidence>
<evidence type="ECO:0000305" key="6"/>
<evidence type="ECO:0007744" key="7">
    <source>
        <dbReference type="PDB" id="1EG2"/>
    </source>
</evidence>
<evidence type="ECO:0007829" key="8">
    <source>
        <dbReference type="PDB" id="1EG2"/>
    </source>
</evidence>
<evidence type="ECO:0007829" key="9">
    <source>
        <dbReference type="PDB" id="1NW6"/>
    </source>
</evidence>
<sequence>MANRSHHNAGHRAMNALRKSGQKHSSESQLGSSEIGTTRHVYDVCDCLDTLAKLPDDSVQLIICDPPYNIMLADWDDHMDYIGWAKRWLAEAERVLSPTGSIAIFGGLQYQGEAGSGDLISIISHMRQNSKMLLANLIIWNYPNGMSAQRFFANRHEEIAWFAKTKKYFFDLDAVREPYDEETKAAYMKDKRLNPESVEKGRNPTNVWRMSRLNGNSLERVGHPTQKPAAVIERLVRALSHPGSTVLDFFAGSGVTARVAIQEGRNSICTDAAPVFKEYYQKQLTFLQDDGLIDKARSYEIVEGAANFGAALQRGDVAS</sequence>
<dbReference type="EC" id="2.1.1.72" evidence="2"/>
<dbReference type="EMBL" id="X16456">
    <property type="protein sequence ID" value="CAA34475.1"/>
    <property type="molecule type" value="Genomic_DNA"/>
</dbReference>
<dbReference type="PIR" id="S07570">
    <property type="entry name" value="S07570"/>
</dbReference>
<dbReference type="PDB" id="1EG2">
    <property type="method" value="X-ray"/>
    <property type="resolution" value="1.75 A"/>
    <property type="chains" value="A=1-319"/>
</dbReference>
<dbReference type="PDB" id="1NW5">
    <property type="method" value="X-ray"/>
    <property type="resolution" value="2.05 A"/>
    <property type="chains" value="A=1-319"/>
</dbReference>
<dbReference type="PDB" id="1NW6">
    <property type="method" value="X-ray"/>
    <property type="resolution" value="1.94 A"/>
    <property type="chains" value="A=1-319"/>
</dbReference>
<dbReference type="PDB" id="1NW7">
    <property type="method" value="X-ray"/>
    <property type="resolution" value="2.10 A"/>
    <property type="chains" value="A=1-319"/>
</dbReference>
<dbReference type="PDB" id="1NW8">
    <property type="method" value="X-ray"/>
    <property type="resolution" value="2.25 A"/>
    <property type="chains" value="A=1-319"/>
</dbReference>
<dbReference type="PDBsum" id="1EG2"/>
<dbReference type="PDBsum" id="1NW5"/>
<dbReference type="PDBsum" id="1NW6"/>
<dbReference type="PDBsum" id="1NW7"/>
<dbReference type="PDBsum" id="1NW8"/>
<dbReference type="SMR" id="P14751"/>
<dbReference type="DrugBank" id="DB02282">
    <property type="generic name" value="5'-S-methyl-5'-thioadenosine"/>
</dbReference>
<dbReference type="DrugBank" id="DB01752">
    <property type="generic name" value="S-adenosyl-L-homocysteine"/>
</dbReference>
<dbReference type="DrugBank" id="DB01910">
    <property type="generic name" value="Sinefungin"/>
</dbReference>
<dbReference type="REBASE" id="3487">
    <property type="entry name" value="M.RsrI"/>
</dbReference>
<dbReference type="BRENDA" id="2.1.1.72">
    <property type="organism ID" value="5383"/>
</dbReference>
<dbReference type="EvolutionaryTrace" id="P14751"/>
<dbReference type="PRO" id="PR:P14751"/>
<dbReference type="GO" id="GO:0003677">
    <property type="term" value="F:DNA binding"/>
    <property type="evidence" value="ECO:0007669"/>
    <property type="project" value="UniProtKB-KW"/>
</dbReference>
<dbReference type="GO" id="GO:0008170">
    <property type="term" value="F:N-methyltransferase activity"/>
    <property type="evidence" value="ECO:0007669"/>
    <property type="project" value="InterPro"/>
</dbReference>
<dbReference type="GO" id="GO:0009007">
    <property type="term" value="F:site-specific DNA-methyltransferase (adenine-specific) activity"/>
    <property type="evidence" value="ECO:0007669"/>
    <property type="project" value="UniProtKB-EC"/>
</dbReference>
<dbReference type="GO" id="GO:0009307">
    <property type="term" value="P:DNA restriction-modification system"/>
    <property type="evidence" value="ECO:0007669"/>
    <property type="project" value="UniProtKB-KW"/>
</dbReference>
<dbReference type="GO" id="GO:0032259">
    <property type="term" value="P:methylation"/>
    <property type="evidence" value="ECO:0007669"/>
    <property type="project" value="UniProtKB-KW"/>
</dbReference>
<dbReference type="CDD" id="cd02440">
    <property type="entry name" value="AdoMet_MTases"/>
    <property type="match status" value="1"/>
</dbReference>
<dbReference type="Gene3D" id="3.40.50.150">
    <property type="entry name" value="Vaccinia Virus protein VP39"/>
    <property type="match status" value="1"/>
</dbReference>
<dbReference type="InterPro" id="IPR002941">
    <property type="entry name" value="DNA_methylase_N4/N6"/>
</dbReference>
<dbReference type="InterPro" id="IPR002052">
    <property type="entry name" value="DNA_methylase_N6_adenine_CS"/>
</dbReference>
<dbReference type="InterPro" id="IPR002295">
    <property type="entry name" value="N4/N6-MTase_EcoPI_Mod-like"/>
</dbReference>
<dbReference type="InterPro" id="IPR029063">
    <property type="entry name" value="SAM-dependent_MTases_sf"/>
</dbReference>
<dbReference type="Pfam" id="PF01555">
    <property type="entry name" value="N6_N4_Mtase"/>
    <property type="match status" value="1"/>
</dbReference>
<dbReference type="PRINTS" id="PR00506">
    <property type="entry name" value="D21N6MTFRASE"/>
</dbReference>
<dbReference type="SUPFAM" id="SSF53335">
    <property type="entry name" value="S-adenosyl-L-methionine-dependent methyltransferases"/>
    <property type="match status" value="1"/>
</dbReference>
<dbReference type="PROSITE" id="PS00092">
    <property type="entry name" value="N6_MTASE"/>
    <property type="match status" value="1"/>
</dbReference>